<sequence length="164" mass="18710">MDLLYFFLLIWPPYVANGSAVLANKFKIRHPIDFGKTFVDGRRIFGDGKTYEGFLIGLSTGTFIGYAPNLLYKHLSLLDAFVLSIAALLGDLFGAFIKRRLCMPRGYPAFPLDQLDFLLTSLAVYTLYKDISVEYIIAAVIITPLIHRITNYIAYYLRLKKEPW</sequence>
<feature type="chain" id="PRO_0000298287" description="CDP-archaeol synthase">
    <location>
        <begin position="1"/>
        <end position="164"/>
    </location>
</feature>
<feature type="transmembrane region" description="Helical" evidence="1">
    <location>
        <begin position="3"/>
        <end position="23"/>
    </location>
</feature>
<feature type="transmembrane region" description="Helical" evidence="1">
    <location>
        <begin position="51"/>
        <end position="71"/>
    </location>
</feature>
<feature type="transmembrane region" description="Helical" evidence="1">
    <location>
        <begin position="77"/>
        <end position="97"/>
    </location>
</feature>
<feature type="transmembrane region" description="Helical" evidence="1">
    <location>
        <begin position="122"/>
        <end position="142"/>
    </location>
</feature>
<keyword id="KW-1003">Cell membrane</keyword>
<keyword id="KW-0444">Lipid biosynthesis</keyword>
<keyword id="KW-0443">Lipid metabolism</keyword>
<keyword id="KW-0460">Magnesium</keyword>
<keyword id="KW-0472">Membrane</keyword>
<keyword id="KW-0594">Phospholipid biosynthesis</keyword>
<keyword id="KW-1208">Phospholipid metabolism</keyword>
<keyword id="KW-0808">Transferase</keyword>
<keyword id="KW-0812">Transmembrane</keyword>
<keyword id="KW-1133">Transmembrane helix</keyword>
<protein>
    <recommendedName>
        <fullName evidence="1">CDP-archaeol synthase</fullName>
        <ecNumber evidence="1">2.7.7.67</ecNumber>
    </recommendedName>
    <alternativeName>
        <fullName evidence="1">CDP-2,3-bis-(O-geranylgeranyl)-sn-glycerol synthase</fullName>
    </alternativeName>
</protein>
<comment type="function">
    <text evidence="1">Catalyzes the formation of CDP-2,3-bis-(O-geranylgeranyl)-sn-glycerol (CDP-archaeol) from 2,3-bis-(O-geranylgeranyl)-sn-glycerol 1-phosphate (DGGGP) and CTP. This reaction is the third ether-bond-formation step in the biosynthesis of archaeal membrane lipids.</text>
</comment>
<comment type="catalytic activity">
    <reaction evidence="1">
        <text>2,3-bis-O-(geranylgeranyl)-sn-glycerol 1-phosphate + CTP + H(+) = CDP-2,3-bis-O-(geranylgeranyl)-sn-glycerol + diphosphate</text>
        <dbReference type="Rhea" id="RHEA:25690"/>
        <dbReference type="ChEBI" id="CHEBI:15378"/>
        <dbReference type="ChEBI" id="CHEBI:33019"/>
        <dbReference type="ChEBI" id="CHEBI:37563"/>
        <dbReference type="ChEBI" id="CHEBI:58837"/>
        <dbReference type="ChEBI" id="CHEBI:58838"/>
        <dbReference type="EC" id="2.7.7.67"/>
    </reaction>
</comment>
<comment type="cofactor">
    <cofactor evidence="1">
        <name>Mg(2+)</name>
        <dbReference type="ChEBI" id="CHEBI:18420"/>
    </cofactor>
</comment>
<comment type="pathway">
    <text evidence="1">Membrane lipid metabolism; glycerophospholipid metabolism.</text>
</comment>
<comment type="subcellular location">
    <subcellularLocation>
        <location evidence="1">Cell membrane</location>
        <topology evidence="1">Multi-pass membrane protein</topology>
    </subcellularLocation>
</comment>
<comment type="similarity">
    <text evidence="1">Belongs to the CDP-archaeol synthase family.</text>
</comment>
<reference key="1">
    <citation type="submission" date="2006-12" db="EMBL/GenBank/DDBJ databases">
        <title>Complete sequence of Pyrobaculum islandicum DSM 4184.</title>
        <authorList>
            <person name="Copeland A."/>
            <person name="Lucas S."/>
            <person name="Lapidus A."/>
            <person name="Barry K."/>
            <person name="Detter J.C."/>
            <person name="Glavina del Rio T."/>
            <person name="Dalin E."/>
            <person name="Tice H."/>
            <person name="Pitluck S."/>
            <person name="Meincke L."/>
            <person name="Brettin T."/>
            <person name="Bruce D."/>
            <person name="Han C."/>
            <person name="Tapia R."/>
            <person name="Gilna P."/>
            <person name="Schmutz J."/>
            <person name="Larimer F."/>
            <person name="Land M."/>
            <person name="Hauser L."/>
            <person name="Kyrpides N."/>
            <person name="Mikhailova N."/>
            <person name="Cozen A.E."/>
            <person name="Fitz-Gibbon S.T."/>
            <person name="House C.H."/>
            <person name="Saltikov C."/>
            <person name="Lowe T."/>
            <person name="Richardson P."/>
        </authorList>
    </citation>
    <scope>NUCLEOTIDE SEQUENCE [LARGE SCALE GENOMIC DNA]</scope>
    <source>
        <strain>DSM 4184 / JCM 9189 / GEO3</strain>
    </source>
</reference>
<dbReference type="EC" id="2.7.7.67" evidence="1"/>
<dbReference type="EMBL" id="CP000504">
    <property type="protein sequence ID" value="ABL87886.1"/>
    <property type="molecule type" value="Genomic_DNA"/>
</dbReference>
<dbReference type="RefSeq" id="WP_011762462.1">
    <property type="nucleotide sequence ID" value="NC_008701.1"/>
</dbReference>
<dbReference type="SMR" id="A1RSF4"/>
<dbReference type="STRING" id="384616.Pisl_0708"/>
<dbReference type="GeneID" id="4617393"/>
<dbReference type="KEGG" id="pis:Pisl_0708"/>
<dbReference type="eggNOG" id="arCOG04106">
    <property type="taxonomic scope" value="Archaea"/>
</dbReference>
<dbReference type="HOGENOM" id="CLU_105710_0_0_2"/>
<dbReference type="OrthoDB" id="45383at2157"/>
<dbReference type="UniPathway" id="UPA00940"/>
<dbReference type="Proteomes" id="UP000002595">
    <property type="component" value="Chromosome"/>
</dbReference>
<dbReference type="GO" id="GO:0005886">
    <property type="term" value="C:plasma membrane"/>
    <property type="evidence" value="ECO:0007669"/>
    <property type="project" value="UniProtKB-SubCell"/>
</dbReference>
<dbReference type="GO" id="GO:0043338">
    <property type="term" value="F:CDP-2,3-bis-(O-geranylgeranyl)-sn-glycerol synthase activity"/>
    <property type="evidence" value="ECO:0007669"/>
    <property type="project" value="UniProtKB-EC"/>
</dbReference>
<dbReference type="GO" id="GO:0046474">
    <property type="term" value="P:glycerophospholipid biosynthetic process"/>
    <property type="evidence" value="ECO:0007669"/>
    <property type="project" value="UniProtKB-UniRule"/>
</dbReference>
<dbReference type="HAMAP" id="MF_01117">
    <property type="entry name" value="CDP_archaeol_synth"/>
    <property type="match status" value="1"/>
</dbReference>
<dbReference type="InterPro" id="IPR032690">
    <property type="entry name" value="CarS"/>
</dbReference>
<dbReference type="InterPro" id="IPR002726">
    <property type="entry name" value="CarS_archaea"/>
</dbReference>
<dbReference type="NCBIfam" id="NF003114">
    <property type="entry name" value="PRK04032.1"/>
    <property type="match status" value="1"/>
</dbReference>
<dbReference type="PANTHER" id="PTHR39650">
    <property type="entry name" value="CDP-ARCHAEOL SYNTHASE"/>
    <property type="match status" value="1"/>
</dbReference>
<dbReference type="PANTHER" id="PTHR39650:SF1">
    <property type="entry name" value="CDP-ARCHAEOL SYNTHASE"/>
    <property type="match status" value="1"/>
</dbReference>
<dbReference type="Pfam" id="PF01864">
    <property type="entry name" value="CarS-like"/>
    <property type="match status" value="1"/>
</dbReference>
<name>CDPAS_PYRIL</name>
<organism>
    <name type="scientific">Pyrobaculum islandicum (strain DSM 4184 / JCM 9189 / GEO3)</name>
    <dbReference type="NCBI Taxonomy" id="384616"/>
    <lineage>
        <taxon>Archaea</taxon>
        <taxon>Thermoproteota</taxon>
        <taxon>Thermoprotei</taxon>
        <taxon>Thermoproteales</taxon>
        <taxon>Thermoproteaceae</taxon>
        <taxon>Pyrobaculum</taxon>
    </lineage>
</organism>
<proteinExistence type="inferred from homology"/>
<accession>A1RSF4</accession>
<evidence type="ECO:0000255" key="1">
    <source>
        <dbReference type="HAMAP-Rule" id="MF_01117"/>
    </source>
</evidence>
<gene>
    <name evidence="1" type="primary">carS</name>
    <name type="ordered locus">Pisl_0708</name>
</gene>